<proteinExistence type="inferred from homology"/>
<keyword id="KW-0067">ATP-binding</keyword>
<keyword id="KW-0131">Cell cycle</keyword>
<keyword id="KW-0132">Cell division</keyword>
<keyword id="KW-0133">Cell shape</keyword>
<keyword id="KW-0961">Cell wall biogenesis/degradation</keyword>
<keyword id="KW-0963">Cytoplasm</keyword>
<keyword id="KW-0436">Ligase</keyword>
<keyword id="KW-0547">Nucleotide-binding</keyword>
<keyword id="KW-0573">Peptidoglycan synthesis</keyword>
<keyword id="KW-1185">Reference proteome</keyword>
<sequence length="466" mass="49018">MIPVKGFAGANVAVLGLGRSGLATARALRAGGAEALCWDDNPAAREAAEGEGFTIRDLRKQGVRDDTACLIVSPGIPHLYPAPNPVVAAALEAGVPVDNDIGLFFRSFAGPEWDGFDTLPRVVAVTGSNGKSTTSALIHHILSEAGRPVQLAGNIGRGVLDIEPGEEGSVVVLELSSYQTDLARALTPDVAVFTNLSPDHLDRHGGMGGYFAAKRRLFAEGGPDRAVIGVDESEGLYLAGQMSEGPGDDRVIRVSVSRKLTGPGWQVFARKGYLSEYRKGRQAGSIDLRDIRGLPGAHNHQNACAAYAACRALGLSPKAIEAGMRSYPGLPHRSQIVAEAGGVTYVNDSKATNVDAALKALGAFKRIRWICGGLQKEGGIAALNGGLAEVLKAYVIGREAAGFALQLEVESEVCTTMDEAVARAMAEAEPGDTVLLAPAAASFDQYDNFERRGEDFMAEVQKRLDG</sequence>
<organism>
    <name type="scientific">Ruegeria pomeroyi (strain ATCC 700808 / DSM 15171 / DSS-3)</name>
    <name type="common">Silicibacter pomeroyi</name>
    <dbReference type="NCBI Taxonomy" id="246200"/>
    <lineage>
        <taxon>Bacteria</taxon>
        <taxon>Pseudomonadati</taxon>
        <taxon>Pseudomonadota</taxon>
        <taxon>Alphaproteobacteria</taxon>
        <taxon>Rhodobacterales</taxon>
        <taxon>Roseobacteraceae</taxon>
        <taxon>Ruegeria</taxon>
    </lineage>
</organism>
<evidence type="ECO:0000255" key="1">
    <source>
        <dbReference type="HAMAP-Rule" id="MF_00639"/>
    </source>
</evidence>
<feature type="chain" id="PRO_0000109082" description="UDP-N-acetylmuramoylalanine--D-glutamate ligase">
    <location>
        <begin position="1"/>
        <end position="466"/>
    </location>
</feature>
<feature type="binding site" evidence="1">
    <location>
        <begin position="127"/>
        <end position="133"/>
    </location>
    <ligand>
        <name>ATP</name>
        <dbReference type="ChEBI" id="CHEBI:30616"/>
    </ligand>
</feature>
<gene>
    <name evidence="1" type="primary">murD</name>
    <name type="ordered locus">SPO1187</name>
</gene>
<comment type="function">
    <text evidence="1">Cell wall formation. Catalyzes the addition of glutamate to the nucleotide precursor UDP-N-acetylmuramoyl-L-alanine (UMA).</text>
</comment>
<comment type="catalytic activity">
    <reaction evidence="1">
        <text>UDP-N-acetyl-alpha-D-muramoyl-L-alanine + D-glutamate + ATP = UDP-N-acetyl-alpha-D-muramoyl-L-alanyl-D-glutamate + ADP + phosphate + H(+)</text>
        <dbReference type="Rhea" id="RHEA:16429"/>
        <dbReference type="ChEBI" id="CHEBI:15378"/>
        <dbReference type="ChEBI" id="CHEBI:29986"/>
        <dbReference type="ChEBI" id="CHEBI:30616"/>
        <dbReference type="ChEBI" id="CHEBI:43474"/>
        <dbReference type="ChEBI" id="CHEBI:83898"/>
        <dbReference type="ChEBI" id="CHEBI:83900"/>
        <dbReference type="ChEBI" id="CHEBI:456216"/>
        <dbReference type="EC" id="6.3.2.9"/>
    </reaction>
</comment>
<comment type="pathway">
    <text evidence="1">Cell wall biogenesis; peptidoglycan biosynthesis.</text>
</comment>
<comment type="subcellular location">
    <subcellularLocation>
        <location evidence="1">Cytoplasm</location>
    </subcellularLocation>
</comment>
<comment type="similarity">
    <text evidence="1">Belongs to the MurCDEF family.</text>
</comment>
<name>MURD_RUEPO</name>
<protein>
    <recommendedName>
        <fullName evidence="1">UDP-N-acetylmuramoylalanine--D-glutamate ligase</fullName>
        <ecNumber evidence="1">6.3.2.9</ecNumber>
    </recommendedName>
    <alternativeName>
        <fullName evidence="1">D-glutamic acid-adding enzyme</fullName>
    </alternativeName>
    <alternativeName>
        <fullName evidence="1">UDP-N-acetylmuramoyl-L-alanyl-D-glutamate synthetase</fullName>
    </alternativeName>
</protein>
<dbReference type="EC" id="6.3.2.9" evidence="1"/>
<dbReference type="EMBL" id="CP000031">
    <property type="protein sequence ID" value="AAV94483.1"/>
    <property type="molecule type" value="Genomic_DNA"/>
</dbReference>
<dbReference type="RefSeq" id="WP_011046930.1">
    <property type="nucleotide sequence ID" value="NC_003911.12"/>
</dbReference>
<dbReference type="SMR" id="Q5LU71"/>
<dbReference type="STRING" id="246200.SPO1187"/>
<dbReference type="PaxDb" id="246200-SPO1187"/>
<dbReference type="KEGG" id="sil:SPO1187"/>
<dbReference type="eggNOG" id="COG0771">
    <property type="taxonomic scope" value="Bacteria"/>
</dbReference>
<dbReference type="HOGENOM" id="CLU_032540_3_0_5"/>
<dbReference type="OrthoDB" id="9809796at2"/>
<dbReference type="UniPathway" id="UPA00219"/>
<dbReference type="Proteomes" id="UP000001023">
    <property type="component" value="Chromosome"/>
</dbReference>
<dbReference type="GO" id="GO:0005737">
    <property type="term" value="C:cytoplasm"/>
    <property type="evidence" value="ECO:0007669"/>
    <property type="project" value="UniProtKB-SubCell"/>
</dbReference>
<dbReference type="GO" id="GO:0005524">
    <property type="term" value="F:ATP binding"/>
    <property type="evidence" value="ECO:0007669"/>
    <property type="project" value="UniProtKB-UniRule"/>
</dbReference>
<dbReference type="GO" id="GO:0008764">
    <property type="term" value="F:UDP-N-acetylmuramoylalanine-D-glutamate ligase activity"/>
    <property type="evidence" value="ECO:0007669"/>
    <property type="project" value="UniProtKB-UniRule"/>
</dbReference>
<dbReference type="GO" id="GO:0051301">
    <property type="term" value="P:cell division"/>
    <property type="evidence" value="ECO:0007669"/>
    <property type="project" value="UniProtKB-KW"/>
</dbReference>
<dbReference type="GO" id="GO:0071555">
    <property type="term" value="P:cell wall organization"/>
    <property type="evidence" value="ECO:0007669"/>
    <property type="project" value="UniProtKB-KW"/>
</dbReference>
<dbReference type="GO" id="GO:0009252">
    <property type="term" value="P:peptidoglycan biosynthetic process"/>
    <property type="evidence" value="ECO:0007669"/>
    <property type="project" value="UniProtKB-UniRule"/>
</dbReference>
<dbReference type="GO" id="GO:0008360">
    <property type="term" value="P:regulation of cell shape"/>
    <property type="evidence" value="ECO:0007669"/>
    <property type="project" value="UniProtKB-KW"/>
</dbReference>
<dbReference type="Gene3D" id="3.90.190.20">
    <property type="entry name" value="Mur ligase, C-terminal domain"/>
    <property type="match status" value="1"/>
</dbReference>
<dbReference type="Gene3D" id="3.40.1190.10">
    <property type="entry name" value="Mur-like, catalytic domain"/>
    <property type="match status" value="1"/>
</dbReference>
<dbReference type="Gene3D" id="3.40.50.720">
    <property type="entry name" value="NAD(P)-binding Rossmann-like Domain"/>
    <property type="match status" value="1"/>
</dbReference>
<dbReference type="HAMAP" id="MF_00639">
    <property type="entry name" value="MurD"/>
    <property type="match status" value="1"/>
</dbReference>
<dbReference type="InterPro" id="IPR036565">
    <property type="entry name" value="Mur-like_cat_sf"/>
</dbReference>
<dbReference type="InterPro" id="IPR004101">
    <property type="entry name" value="Mur_ligase_C"/>
</dbReference>
<dbReference type="InterPro" id="IPR036615">
    <property type="entry name" value="Mur_ligase_C_dom_sf"/>
</dbReference>
<dbReference type="InterPro" id="IPR013221">
    <property type="entry name" value="Mur_ligase_cen"/>
</dbReference>
<dbReference type="InterPro" id="IPR005762">
    <property type="entry name" value="MurD"/>
</dbReference>
<dbReference type="NCBIfam" id="TIGR01087">
    <property type="entry name" value="murD"/>
    <property type="match status" value="1"/>
</dbReference>
<dbReference type="PANTHER" id="PTHR43692">
    <property type="entry name" value="UDP-N-ACETYLMURAMOYLALANINE--D-GLUTAMATE LIGASE"/>
    <property type="match status" value="1"/>
</dbReference>
<dbReference type="PANTHER" id="PTHR43692:SF1">
    <property type="entry name" value="UDP-N-ACETYLMURAMOYLALANINE--D-GLUTAMATE LIGASE"/>
    <property type="match status" value="1"/>
</dbReference>
<dbReference type="Pfam" id="PF02875">
    <property type="entry name" value="Mur_ligase_C"/>
    <property type="match status" value="1"/>
</dbReference>
<dbReference type="Pfam" id="PF08245">
    <property type="entry name" value="Mur_ligase_M"/>
    <property type="match status" value="1"/>
</dbReference>
<dbReference type="SUPFAM" id="SSF51984">
    <property type="entry name" value="MurCD N-terminal domain"/>
    <property type="match status" value="1"/>
</dbReference>
<dbReference type="SUPFAM" id="SSF53623">
    <property type="entry name" value="MurD-like peptide ligases, catalytic domain"/>
    <property type="match status" value="1"/>
</dbReference>
<dbReference type="SUPFAM" id="SSF53244">
    <property type="entry name" value="MurD-like peptide ligases, peptide-binding domain"/>
    <property type="match status" value="1"/>
</dbReference>
<accession>Q5LU71</accession>
<reference key="1">
    <citation type="journal article" date="2004" name="Nature">
        <title>Genome sequence of Silicibacter pomeroyi reveals adaptations to the marine environment.</title>
        <authorList>
            <person name="Moran M.A."/>
            <person name="Buchan A."/>
            <person name="Gonzalez J.M."/>
            <person name="Heidelberg J.F."/>
            <person name="Whitman W.B."/>
            <person name="Kiene R.P."/>
            <person name="Henriksen J.R."/>
            <person name="King G.M."/>
            <person name="Belas R."/>
            <person name="Fuqua C."/>
            <person name="Brinkac L.M."/>
            <person name="Lewis M."/>
            <person name="Johri S."/>
            <person name="Weaver B."/>
            <person name="Pai G."/>
            <person name="Eisen J.A."/>
            <person name="Rahe E."/>
            <person name="Sheldon W.M."/>
            <person name="Ye W."/>
            <person name="Miller T.R."/>
            <person name="Carlton J."/>
            <person name="Rasko D.A."/>
            <person name="Paulsen I.T."/>
            <person name="Ren Q."/>
            <person name="Daugherty S.C."/>
            <person name="DeBoy R.T."/>
            <person name="Dodson R.J."/>
            <person name="Durkin A.S."/>
            <person name="Madupu R."/>
            <person name="Nelson W.C."/>
            <person name="Sullivan S.A."/>
            <person name="Rosovitz M.J."/>
            <person name="Haft D.H."/>
            <person name="Selengut J."/>
            <person name="Ward N."/>
        </authorList>
    </citation>
    <scope>NUCLEOTIDE SEQUENCE [LARGE SCALE GENOMIC DNA]</scope>
    <source>
        <strain>ATCC 700808 / DSM 15171 / DSS-3</strain>
    </source>
</reference>
<reference key="2">
    <citation type="journal article" date="2014" name="Stand. Genomic Sci.">
        <title>An updated genome annotation for the model marine bacterium Ruegeria pomeroyi DSS-3.</title>
        <authorList>
            <person name="Rivers A.R."/>
            <person name="Smith C.B."/>
            <person name="Moran M.A."/>
        </authorList>
    </citation>
    <scope>GENOME REANNOTATION</scope>
    <source>
        <strain>ATCC 700808 / DSM 15171 / DSS-3</strain>
    </source>
</reference>